<keyword id="KW-0663">Pyridoxal phosphate</keyword>
<keyword id="KW-1185">Reference proteome</keyword>
<proteinExistence type="inferred from homology"/>
<evidence type="ECO:0000255" key="1">
    <source>
        <dbReference type="HAMAP-Rule" id="MF_02087"/>
    </source>
</evidence>
<sequence length="209" mass="22235">MSVPAVLAGIREAEAQAGRAAGTVRLVAVTKGHSLDEIRGQVLAHGDFPLAENRGQELRDKVAGLPGAEWHFIGPLQRNKIKYLRGVTLVHSIEEPWQAQAIADAAAEWGQAPAVLLQRHNGEGQKHGVLPDDLPAVLREVRATGLEVRGLMAMAPYDDEARAAQVFADTARQAQDLGLVELSMGMSGDYPLAVAAGATLVRVGRSLFA</sequence>
<feature type="chain" id="PRO_0000163195" description="Pyridoxal phosphate homeostasis protein">
    <location>
        <begin position="1"/>
        <end position="209"/>
    </location>
</feature>
<feature type="modified residue" description="N6-(pyridoxal phosphate)lysine" evidence="1">
    <location>
        <position position="31"/>
    </location>
</feature>
<comment type="function">
    <text evidence="1">Pyridoxal 5'-phosphate (PLP)-binding protein, which is involved in PLP homeostasis.</text>
</comment>
<comment type="similarity">
    <text evidence="1">Belongs to the pyridoxal phosphate-binding protein YggS/PROSC family.</text>
</comment>
<dbReference type="EMBL" id="AE000513">
    <property type="protein sequence ID" value="AAF10940.1"/>
    <property type="molecule type" value="Genomic_DNA"/>
</dbReference>
<dbReference type="PIR" id="A75403">
    <property type="entry name" value="A75403"/>
</dbReference>
<dbReference type="RefSeq" id="NP_295091.1">
    <property type="nucleotide sequence ID" value="NC_001263.1"/>
</dbReference>
<dbReference type="RefSeq" id="WP_010888009.1">
    <property type="nucleotide sequence ID" value="NC_001263.1"/>
</dbReference>
<dbReference type="SMR" id="Q9RUL6"/>
<dbReference type="FunCoup" id="Q9RUL6">
    <property type="interactions" value="354"/>
</dbReference>
<dbReference type="STRING" id="243230.DR_1368"/>
<dbReference type="PaxDb" id="243230-DR_1368"/>
<dbReference type="EnsemblBacteria" id="AAF10940">
    <property type="protein sequence ID" value="AAF10940"/>
    <property type="gene ID" value="DR_1368"/>
</dbReference>
<dbReference type="GeneID" id="69517613"/>
<dbReference type="KEGG" id="dra:DR_1368"/>
<dbReference type="PATRIC" id="fig|243230.17.peg.1565"/>
<dbReference type="eggNOG" id="COG0325">
    <property type="taxonomic scope" value="Bacteria"/>
</dbReference>
<dbReference type="HOGENOM" id="CLU_059988_1_0_0"/>
<dbReference type="InParanoid" id="Q9RUL6"/>
<dbReference type="OrthoDB" id="9804072at2"/>
<dbReference type="Proteomes" id="UP000002524">
    <property type="component" value="Chromosome 1"/>
</dbReference>
<dbReference type="GO" id="GO:0005737">
    <property type="term" value="C:cytoplasm"/>
    <property type="evidence" value="ECO:0000318"/>
    <property type="project" value="GO_Central"/>
</dbReference>
<dbReference type="GO" id="GO:0030170">
    <property type="term" value="F:pyridoxal phosphate binding"/>
    <property type="evidence" value="ECO:0000318"/>
    <property type="project" value="GO_Central"/>
</dbReference>
<dbReference type="CDD" id="cd00635">
    <property type="entry name" value="PLPDE_III_YBL036c_like"/>
    <property type="match status" value="1"/>
</dbReference>
<dbReference type="FunFam" id="3.20.20.10:FF:000056">
    <property type="entry name" value="Pyridoxal phosphate homeostasis protein"/>
    <property type="match status" value="1"/>
</dbReference>
<dbReference type="Gene3D" id="3.20.20.10">
    <property type="entry name" value="Alanine racemase"/>
    <property type="match status" value="1"/>
</dbReference>
<dbReference type="HAMAP" id="MF_02087">
    <property type="entry name" value="PLP_homeostasis"/>
    <property type="match status" value="1"/>
</dbReference>
<dbReference type="InterPro" id="IPR001608">
    <property type="entry name" value="Ala_racemase_N"/>
</dbReference>
<dbReference type="InterPro" id="IPR029066">
    <property type="entry name" value="PLP-binding_barrel"/>
</dbReference>
<dbReference type="InterPro" id="IPR011078">
    <property type="entry name" value="PyrdxlP_homeostasis"/>
</dbReference>
<dbReference type="PANTHER" id="PTHR10146">
    <property type="entry name" value="PROLINE SYNTHETASE CO-TRANSCRIBED BACTERIAL HOMOLOG PROTEIN"/>
    <property type="match status" value="1"/>
</dbReference>
<dbReference type="PANTHER" id="PTHR10146:SF14">
    <property type="entry name" value="PYRIDOXAL PHOSPHATE HOMEOSTASIS PROTEIN"/>
    <property type="match status" value="1"/>
</dbReference>
<dbReference type="Pfam" id="PF01168">
    <property type="entry name" value="Ala_racemase_N"/>
    <property type="match status" value="1"/>
</dbReference>
<dbReference type="PIRSF" id="PIRSF004848">
    <property type="entry name" value="YBL036c_PLPDEIII"/>
    <property type="match status" value="1"/>
</dbReference>
<dbReference type="SUPFAM" id="SSF51419">
    <property type="entry name" value="PLP-binding barrel"/>
    <property type="match status" value="1"/>
</dbReference>
<dbReference type="PROSITE" id="PS01211">
    <property type="entry name" value="UPF0001"/>
    <property type="match status" value="1"/>
</dbReference>
<reference key="1">
    <citation type="journal article" date="1999" name="Science">
        <title>Genome sequence of the radioresistant bacterium Deinococcus radiodurans R1.</title>
        <authorList>
            <person name="White O."/>
            <person name="Eisen J.A."/>
            <person name="Heidelberg J.F."/>
            <person name="Hickey E.K."/>
            <person name="Peterson J.D."/>
            <person name="Dodson R.J."/>
            <person name="Haft D.H."/>
            <person name="Gwinn M.L."/>
            <person name="Nelson W.C."/>
            <person name="Richardson D.L."/>
            <person name="Moffat K.S."/>
            <person name="Qin H."/>
            <person name="Jiang L."/>
            <person name="Pamphile W."/>
            <person name="Crosby M."/>
            <person name="Shen M."/>
            <person name="Vamathevan J.J."/>
            <person name="Lam P."/>
            <person name="McDonald L.A."/>
            <person name="Utterback T.R."/>
            <person name="Zalewski C."/>
            <person name="Makarova K.S."/>
            <person name="Aravind L."/>
            <person name="Daly M.J."/>
            <person name="Minton K.W."/>
            <person name="Fleischmann R.D."/>
            <person name="Ketchum K.A."/>
            <person name="Nelson K.E."/>
            <person name="Salzberg S.L."/>
            <person name="Smith H.O."/>
            <person name="Venter J.C."/>
            <person name="Fraser C.M."/>
        </authorList>
    </citation>
    <scope>NUCLEOTIDE SEQUENCE [LARGE SCALE GENOMIC DNA]</scope>
    <source>
        <strain>ATCC 13939 / DSM 20539 / JCM 16871 / CCUG 27074 / LMG 4051 / NBRC 15346 / NCIMB 9279 / VKM B-1422 / R1</strain>
    </source>
</reference>
<organism>
    <name type="scientific">Deinococcus radiodurans (strain ATCC 13939 / DSM 20539 / JCM 16871 / CCUG 27074 / LMG 4051 / NBRC 15346 / NCIMB 9279 / VKM B-1422 / R1)</name>
    <dbReference type="NCBI Taxonomy" id="243230"/>
    <lineage>
        <taxon>Bacteria</taxon>
        <taxon>Thermotogati</taxon>
        <taxon>Deinococcota</taxon>
        <taxon>Deinococci</taxon>
        <taxon>Deinococcales</taxon>
        <taxon>Deinococcaceae</taxon>
        <taxon>Deinococcus</taxon>
    </lineage>
</organism>
<protein>
    <recommendedName>
        <fullName evidence="1">Pyridoxal phosphate homeostasis protein</fullName>
        <shortName evidence="1">PLP homeostasis protein</shortName>
    </recommendedName>
</protein>
<accession>Q9RUL6</accession>
<gene>
    <name type="ordered locus">DR_1368</name>
</gene>
<name>PLPHP_DEIRA</name>